<organism>
    <name type="scientific">Conus araneosus</name>
    <name type="common">Cobweb cone</name>
    <dbReference type="NCBI Taxonomy" id="101286"/>
    <lineage>
        <taxon>Eukaryota</taxon>
        <taxon>Metazoa</taxon>
        <taxon>Spiralia</taxon>
        <taxon>Lophotrochozoa</taxon>
        <taxon>Mollusca</taxon>
        <taxon>Gastropoda</taxon>
        <taxon>Caenogastropoda</taxon>
        <taxon>Neogastropoda</taxon>
        <taxon>Conoidea</taxon>
        <taxon>Conidae</taxon>
        <taxon>Conus</taxon>
    </lineage>
</organism>
<keyword id="KW-0903">Direct protein sequencing</keyword>
<keyword id="KW-1015">Disulfide bond</keyword>
<keyword id="KW-0964">Secreted</keyword>
<keyword id="KW-0800">Toxin</keyword>
<reference key="1">
    <citation type="journal article" date="2015" name="Toxicon">
        <title>A sleep-inducing peptide from the venom of the Indian cone snail Conus araneosus.</title>
        <authorList>
            <person name="Franklin J.B."/>
            <person name="Rajesh R.P."/>
        </authorList>
    </citation>
    <scope>PROTEIN SEQUENCE</scope>
    <scope>SUBCELLULAR LOCATION</scope>
    <scope>MASS SPECTROMETRY</scope>
    <scope>IDENTIFICATION BY MASS SPECTROMETRY</scope>
    <source>
        <tissue>Venom</tissue>
    </source>
</reference>
<comment type="subcellular location">
    <subcellularLocation>
        <location evidence="2">Secreted</location>
    </subcellularLocation>
</comment>
<comment type="tissue specificity">
    <text evidence="5">Expressed by the venom duct.</text>
</comment>
<comment type="domain">
    <text evidence="4">The cysteine framework is III (CC-C-C-CC). Classified in the M-2 branch, since 2 residues stand between the fourth and the fifth cysteine residues.</text>
</comment>
<comment type="mass spectrometry"/>
<comment type="similarity">
    <text evidence="4">Belongs to the conotoxin M superfamily.</text>
</comment>
<dbReference type="GO" id="GO:0005576">
    <property type="term" value="C:extracellular region"/>
    <property type="evidence" value="ECO:0000314"/>
    <property type="project" value="UniProtKB"/>
</dbReference>
<dbReference type="GO" id="GO:0090729">
    <property type="term" value="F:toxin activity"/>
    <property type="evidence" value="ECO:0007669"/>
    <property type="project" value="UniProtKB-KW"/>
</dbReference>
<proteinExistence type="evidence at protein level"/>
<evidence type="ECO:0000250" key="1">
    <source>
        <dbReference type="UniProtKB" id="P0CI24"/>
    </source>
</evidence>
<evidence type="ECO:0000269" key="2">
    <source>
    </source>
</evidence>
<evidence type="ECO:0000303" key="3">
    <source>
    </source>
</evidence>
<evidence type="ECO:0000305" key="4"/>
<evidence type="ECO:0000305" key="5">
    <source>
    </source>
</evidence>
<accession>C0HKZ0</accession>
<sequence>DCCPIAGCPFGCTICC</sequence>
<feature type="peptide" id="PRO_0000441666" description="Conotoxin ar3f" evidence="2">
    <location>
        <begin position="1"/>
        <end position="16"/>
    </location>
</feature>
<feature type="disulfide bond" evidence="1">
    <location>
        <begin position="2"/>
        <end position="16"/>
    </location>
</feature>
<feature type="disulfide bond" evidence="1">
    <location>
        <begin position="3"/>
        <end position="12"/>
    </location>
</feature>
<feature type="disulfide bond" evidence="1">
    <location>
        <begin position="8"/>
        <end position="15"/>
    </location>
</feature>
<feature type="unsure residue" description="I or L" evidence="5">
    <location>
        <position position="5"/>
    </location>
</feature>
<feature type="unsure residue" description="I or L" evidence="5">
    <location>
        <position position="14"/>
    </location>
</feature>
<protein>
    <recommendedName>
        <fullName evidence="3">Conotoxin ar3f</fullName>
    </recommendedName>
</protein>
<name>M3F_CONAO</name>